<reference key="1">
    <citation type="journal article" date="2002" name="J. Bacteriol.">
        <title>Whole-genome comparison of Mycobacterium tuberculosis clinical and laboratory strains.</title>
        <authorList>
            <person name="Fleischmann R.D."/>
            <person name="Alland D."/>
            <person name="Eisen J.A."/>
            <person name="Carpenter L."/>
            <person name="White O."/>
            <person name="Peterson J.D."/>
            <person name="DeBoy R.T."/>
            <person name="Dodson R.J."/>
            <person name="Gwinn M.L."/>
            <person name="Haft D.H."/>
            <person name="Hickey E.K."/>
            <person name="Kolonay J.F."/>
            <person name="Nelson W.C."/>
            <person name="Umayam L.A."/>
            <person name="Ermolaeva M.D."/>
            <person name="Salzberg S.L."/>
            <person name="Delcher A."/>
            <person name="Utterback T.R."/>
            <person name="Weidman J.F."/>
            <person name="Khouri H.M."/>
            <person name="Gill J."/>
            <person name="Mikula A."/>
            <person name="Bishai W."/>
            <person name="Jacobs W.R. Jr."/>
            <person name="Venter J.C."/>
            <person name="Fraser C.M."/>
        </authorList>
    </citation>
    <scope>NUCLEOTIDE SEQUENCE [LARGE SCALE GENOMIC DNA]</scope>
    <source>
        <strain>CDC 1551 / Oshkosh</strain>
    </source>
</reference>
<reference key="2">
    <citation type="journal article" date="2002" name="Mol. Microbiol.">
        <title>Phospholipases C are involved in the virulence of Mycobacterium tuberculosis.</title>
        <authorList>
            <person name="Raynaud C."/>
            <person name="Guilhot C."/>
            <person name="Rauzier J."/>
            <person name="Bordat Y."/>
            <person name="Pelicic V."/>
            <person name="Manganelli R."/>
            <person name="Smith I."/>
            <person name="Gicquel B."/>
            <person name="Jackson M."/>
        </authorList>
    </citation>
    <scope>FUNCTION</scope>
    <scope>CATALYTIC ACTIVITY</scope>
    <scope>SUBCELLULAR LOCATION</scope>
    <scope>INDUCTION</scope>
    <scope>DISRUPTION PHENOTYPE</scope>
    <source>
        <strain>Mt103</strain>
    </source>
</reference>
<organism>
    <name type="scientific">Mycobacterium tuberculosis (strain CDC 1551 / Oshkosh)</name>
    <dbReference type="NCBI Taxonomy" id="83331"/>
    <lineage>
        <taxon>Bacteria</taxon>
        <taxon>Bacillati</taxon>
        <taxon>Actinomycetota</taxon>
        <taxon>Actinomycetes</taxon>
        <taxon>Mycobacteriales</taxon>
        <taxon>Mycobacteriaceae</taxon>
        <taxon>Mycobacterium</taxon>
        <taxon>Mycobacterium tuberculosis complex</taxon>
    </lineage>
</organism>
<gene>
    <name evidence="5" type="primary">plcB</name>
    <name type="synonym">mpcB</name>
    <name type="ordered locus">MT2415</name>
</gene>
<name>PHLB_MYCTO</name>
<evidence type="ECO:0000250" key="1">
    <source>
        <dbReference type="UniProtKB" id="P9WIB3"/>
    </source>
</evidence>
<evidence type="ECO:0000255" key="2">
    <source>
        <dbReference type="PROSITE-ProRule" id="PRU00648"/>
    </source>
</evidence>
<evidence type="ECO:0000256" key="3">
    <source>
        <dbReference type="SAM" id="MobiDB-lite"/>
    </source>
</evidence>
<evidence type="ECO:0000269" key="4">
    <source>
    </source>
</evidence>
<evidence type="ECO:0000303" key="5">
    <source>
    </source>
</evidence>
<evidence type="ECO:0000305" key="6"/>
<sequence length="521" mass="56533">MGSEHPVDGMTRRQFFAKAAAATTAGAFMSLAGPIIEKAYGAGPCPGHLTDIEHIVLLMQENRSFDHYFGTLSDTRGFDDTTPPVVFAQSGWNPMTQAVDPAGVTLPYRFDTTRGPLVAGECVNDPDHSWIGMHNSWNGGANDNWLPAQVPFSPLQGNVPVTMGFYTRRDLPIHYLLADTFTVCDGYFCSLLGGTTPNRLYWMSAWIDPDGTDGGPVLIEPNIQPLQHYSWRIMPENLEDAGVSWKVYQNKLLGALNNTVVGYNGLVNDFKQAADPRSNLARFGISPTYPLDFAADVRNNRLPKVSWVLPGFLLSEHPAFPVNVGAVAIVDALRILLSNPAVWEKTALIVNYDENGGFFDHVVPPTPPPGTPGEFVTVPDIDSVPGSGGIRGPIGLGFRVPCLVISPYSRGPLMVHDTFDHTSTLKLIRARFGVPVPNLTAWRDATVGDMTSTFNFAAPPNPSKPNLDHPRLNALPKLPQCVPNAVLGTVTKTAIPYRVPFPQSMPTQETAPTRGIPSGLC</sequence>
<dbReference type="EC" id="3.1.4.3" evidence="4"/>
<dbReference type="EMBL" id="AE000516">
    <property type="protein sequence ID" value="AAK46708.1"/>
    <property type="status" value="ALT_INIT"/>
    <property type="molecule type" value="Genomic_DNA"/>
</dbReference>
<dbReference type="PIR" id="G70662">
    <property type="entry name" value="G70662"/>
</dbReference>
<dbReference type="SMR" id="P9WIB2"/>
<dbReference type="KEGG" id="mtc:MT2415"/>
<dbReference type="HOGENOM" id="CLU_008770_2_2_11"/>
<dbReference type="Proteomes" id="UP000001020">
    <property type="component" value="Chromosome"/>
</dbReference>
<dbReference type="GO" id="GO:0005576">
    <property type="term" value="C:extracellular region"/>
    <property type="evidence" value="ECO:0007669"/>
    <property type="project" value="UniProtKB-KW"/>
</dbReference>
<dbReference type="GO" id="GO:0034480">
    <property type="term" value="F:phosphatidylcholine phospholipase C activity"/>
    <property type="evidence" value="ECO:0007669"/>
    <property type="project" value="UniProtKB-EC"/>
</dbReference>
<dbReference type="FunFam" id="3.40.720.10:FF:000034">
    <property type="entry name" value="Membrane-associated phospholipase C"/>
    <property type="match status" value="1"/>
</dbReference>
<dbReference type="FunFam" id="3.40.720.10:FF:000036">
    <property type="entry name" value="Membrane-associated phospholipase C"/>
    <property type="match status" value="1"/>
</dbReference>
<dbReference type="Gene3D" id="3.40.720.10">
    <property type="entry name" value="Alkaline Phosphatase, subunit A"/>
    <property type="match status" value="2"/>
</dbReference>
<dbReference type="InterPro" id="IPR017850">
    <property type="entry name" value="Alkaline_phosphatase_core_sf"/>
</dbReference>
<dbReference type="InterPro" id="IPR007312">
    <property type="entry name" value="Phosphoesterase"/>
</dbReference>
<dbReference type="InterPro" id="IPR006311">
    <property type="entry name" value="TAT_signal"/>
</dbReference>
<dbReference type="PANTHER" id="PTHR31956:SF1">
    <property type="entry name" value="NON-SPECIFIC PHOSPHOLIPASE C1"/>
    <property type="match status" value="1"/>
</dbReference>
<dbReference type="PANTHER" id="PTHR31956">
    <property type="entry name" value="NON-SPECIFIC PHOSPHOLIPASE C4-RELATED"/>
    <property type="match status" value="1"/>
</dbReference>
<dbReference type="Pfam" id="PF04185">
    <property type="entry name" value="Phosphoesterase"/>
    <property type="match status" value="1"/>
</dbReference>
<dbReference type="PROSITE" id="PS51318">
    <property type="entry name" value="TAT"/>
    <property type="match status" value="1"/>
</dbReference>
<proteinExistence type="evidence at protein level"/>
<protein>
    <recommendedName>
        <fullName evidence="6">Phospholipase C B</fullName>
        <shortName evidence="6">PLC-B</shortName>
        <ecNumber evidence="4">3.1.4.3</ecNumber>
    </recommendedName>
</protein>
<keyword id="KW-0134">Cell wall</keyword>
<keyword id="KW-0378">Hydrolase</keyword>
<keyword id="KW-1185">Reference proteome</keyword>
<keyword id="KW-0964">Secreted</keyword>
<keyword id="KW-0732">Signal</keyword>
<keyword id="KW-0843">Virulence</keyword>
<comment type="function">
    <text evidence="1 4">Involved in virulence (PubMed:12100560). Induces cytotoxic effects on mouse macrophage cell lines, via direct or indirect enzymatic hydrolysis of cell membrane phospholipids (By similarity). Hydrolyzes phosphatidylcholine (PubMed:12100560).</text>
</comment>
<comment type="catalytic activity">
    <reaction evidence="4">
        <text>a 1,2-diacyl-sn-glycero-3-phosphocholine + H2O = phosphocholine + a 1,2-diacyl-sn-glycerol + H(+)</text>
        <dbReference type="Rhea" id="RHEA:10604"/>
        <dbReference type="ChEBI" id="CHEBI:15377"/>
        <dbReference type="ChEBI" id="CHEBI:15378"/>
        <dbReference type="ChEBI" id="CHEBI:17815"/>
        <dbReference type="ChEBI" id="CHEBI:57643"/>
        <dbReference type="ChEBI" id="CHEBI:295975"/>
        <dbReference type="EC" id="3.1.4.3"/>
    </reaction>
    <physiologicalReaction direction="left-to-right" evidence="4">
        <dbReference type="Rhea" id="RHEA:10605"/>
    </physiologicalReaction>
</comment>
<comment type="subcellular location">
    <subcellularLocation>
        <location evidence="4">Secreted</location>
        <location evidence="4">Cell wall</location>
    </subcellularLocation>
    <text evidence="4">Remains associated with the cell.</text>
</comment>
<comment type="induction">
    <text evidence="4">Expression is induced in vitro in the presence of phosphatidylcholine.</text>
</comment>
<comment type="PTM">
    <text evidence="2">Predicted to be exported by the Tat system. The position of the signal peptide cleavage has not been experimentally proven.</text>
</comment>
<comment type="disruption phenotype">
    <text evidence="4">Disruption of the gene in the clinical strain Mt103 leads to a reduction of the phospholipase C activity of the mutant. The plcABCD mutant exhibits a dramatic decrease in phospholipase C activity. The quadruple mutant is attenuated in the mouse model of infection, but not in infected THP-1 cells.</text>
</comment>
<comment type="similarity">
    <text evidence="6">Belongs to the bacterial phospholipase C family.</text>
</comment>
<comment type="sequence caution" evidence="6">
    <conflict type="erroneous initiation">
        <sequence resource="EMBL-CDS" id="AAK46708"/>
    </conflict>
    <text>Truncated N-terminus.</text>
</comment>
<accession>P9WIB2</accession>
<accession>L0TAY7</accession>
<accession>P95246</accession>
<accession>Q50561</accession>
<feature type="signal peptide" description="Tat-type signal" evidence="2">
    <location>
        <begin position="1"/>
        <end position="39"/>
    </location>
</feature>
<feature type="chain" id="PRO_0000428037" description="Phospholipase C B">
    <location>
        <begin position="40"/>
        <end position="521"/>
    </location>
</feature>
<feature type="region of interest" description="Disordered" evidence="3">
    <location>
        <begin position="501"/>
        <end position="521"/>
    </location>
</feature>